<proteinExistence type="inferred from homology"/>
<feature type="chain" id="PRO_0000307955" description="Large ribosomal subunit protein uL1">
    <location>
        <begin position="1"/>
        <end position="231"/>
    </location>
</feature>
<comment type="function">
    <text evidence="1">Binds directly to 23S rRNA. The L1 stalk is quite mobile in the ribosome, and is involved in E site tRNA release.</text>
</comment>
<comment type="function">
    <text evidence="1">Protein L1 is also a translational repressor protein, it controls the translation of the L11 operon by binding to its mRNA.</text>
</comment>
<comment type="subunit">
    <text evidence="1">Part of the 50S ribosomal subunit.</text>
</comment>
<comment type="similarity">
    <text evidence="1">Belongs to the universal ribosomal protein uL1 family.</text>
</comment>
<evidence type="ECO:0000255" key="1">
    <source>
        <dbReference type="HAMAP-Rule" id="MF_01318"/>
    </source>
</evidence>
<evidence type="ECO:0000305" key="2"/>
<reference key="1">
    <citation type="journal article" date="2006" name="Nat. Biotechnol.">
        <title>Genome sequence of the ubiquitous hydrocarbon-degrading marine bacterium Alcanivorax borkumensis.</title>
        <authorList>
            <person name="Schneiker S."/>
            <person name="Martins dos Santos V.A.P."/>
            <person name="Bartels D."/>
            <person name="Bekel T."/>
            <person name="Brecht M."/>
            <person name="Buhrmester J."/>
            <person name="Chernikova T.N."/>
            <person name="Denaro R."/>
            <person name="Ferrer M."/>
            <person name="Gertler C."/>
            <person name="Goesmann A."/>
            <person name="Golyshina O.V."/>
            <person name="Kaminski F."/>
            <person name="Khachane A.N."/>
            <person name="Lang S."/>
            <person name="Linke B."/>
            <person name="McHardy A.C."/>
            <person name="Meyer F."/>
            <person name="Nechitaylo T."/>
            <person name="Puehler A."/>
            <person name="Regenhardt D."/>
            <person name="Rupp O."/>
            <person name="Sabirova J.S."/>
            <person name="Selbitschka W."/>
            <person name="Yakimov M.M."/>
            <person name="Timmis K.N."/>
            <person name="Vorhoelter F.-J."/>
            <person name="Weidner S."/>
            <person name="Kaiser O."/>
            <person name="Golyshin P.N."/>
        </authorList>
    </citation>
    <scope>NUCLEOTIDE SEQUENCE [LARGE SCALE GENOMIC DNA]</scope>
    <source>
        <strain>ATCC 700651 / DSM 11573 / NCIMB 13689 / SK2</strain>
    </source>
</reference>
<sequence length="231" mass="24190">MAKLSKRNRAIREKIEAGKLYPVEEAVALLAELSAVKFKESVDVAVNLGVDPRKSDQNVRGASVLPHGTGKTVRVAVFAQGAKAEEAKEAGADVVGFDDLAEQVQGGEINFDVVIASPDAMRVVGKLGTILGPRGLMPNPKVGTVTPDVAQAVKNAKGGQVRYRTDKGGIIHCTVGQVGFDTNAIKENVEALIADLKKAKPSSAKGTFFKKVTLSTTMGPGLSIDPASLVM</sequence>
<dbReference type="EMBL" id="AM286690">
    <property type="protein sequence ID" value="CAL15823.1"/>
    <property type="molecule type" value="Genomic_DNA"/>
</dbReference>
<dbReference type="RefSeq" id="WP_011587670.1">
    <property type="nucleotide sequence ID" value="NC_008260.1"/>
</dbReference>
<dbReference type="SMR" id="Q0VSM5"/>
<dbReference type="STRING" id="393595.ABO_0375"/>
<dbReference type="KEGG" id="abo:ABO_0375"/>
<dbReference type="eggNOG" id="COG0081">
    <property type="taxonomic scope" value="Bacteria"/>
</dbReference>
<dbReference type="HOGENOM" id="CLU_062853_0_0_6"/>
<dbReference type="OrthoDB" id="9803740at2"/>
<dbReference type="Proteomes" id="UP000008871">
    <property type="component" value="Chromosome"/>
</dbReference>
<dbReference type="GO" id="GO:0022625">
    <property type="term" value="C:cytosolic large ribosomal subunit"/>
    <property type="evidence" value="ECO:0007669"/>
    <property type="project" value="TreeGrafter"/>
</dbReference>
<dbReference type="GO" id="GO:0019843">
    <property type="term" value="F:rRNA binding"/>
    <property type="evidence" value="ECO:0007669"/>
    <property type="project" value="UniProtKB-UniRule"/>
</dbReference>
<dbReference type="GO" id="GO:0003735">
    <property type="term" value="F:structural constituent of ribosome"/>
    <property type="evidence" value="ECO:0007669"/>
    <property type="project" value="InterPro"/>
</dbReference>
<dbReference type="GO" id="GO:0000049">
    <property type="term" value="F:tRNA binding"/>
    <property type="evidence" value="ECO:0007669"/>
    <property type="project" value="UniProtKB-KW"/>
</dbReference>
<dbReference type="GO" id="GO:0006417">
    <property type="term" value="P:regulation of translation"/>
    <property type="evidence" value="ECO:0007669"/>
    <property type="project" value="UniProtKB-KW"/>
</dbReference>
<dbReference type="GO" id="GO:0006412">
    <property type="term" value="P:translation"/>
    <property type="evidence" value="ECO:0007669"/>
    <property type="project" value="UniProtKB-UniRule"/>
</dbReference>
<dbReference type="CDD" id="cd00403">
    <property type="entry name" value="Ribosomal_L1"/>
    <property type="match status" value="1"/>
</dbReference>
<dbReference type="FunFam" id="3.40.50.790:FF:000001">
    <property type="entry name" value="50S ribosomal protein L1"/>
    <property type="match status" value="1"/>
</dbReference>
<dbReference type="Gene3D" id="3.30.190.20">
    <property type="match status" value="1"/>
</dbReference>
<dbReference type="Gene3D" id="3.40.50.790">
    <property type="match status" value="1"/>
</dbReference>
<dbReference type="HAMAP" id="MF_01318_B">
    <property type="entry name" value="Ribosomal_uL1_B"/>
    <property type="match status" value="1"/>
</dbReference>
<dbReference type="InterPro" id="IPR005878">
    <property type="entry name" value="Ribosom_uL1_bac-type"/>
</dbReference>
<dbReference type="InterPro" id="IPR002143">
    <property type="entry name" value="Ribosomal_uL1"/>
</dbReference>
<dbReference type="InterPro" id="IPR023674">
    <property type="entry name" value="Ribosomal_uL1-like"/>
</dbReference>
<dbReference type="InterPro" id="IPR028364">
    <property type="entry name" value="Ribosomal_uL1/biogenesis"/>
</dbReference>
<dbReference type="InterPro" id="IPR016095">
    <property type="entry name" value="Ribosomal_uL1_3-a/b-sand"/>
</dbReference>
<dbReference type="InterPro" id="IPR023673">
    <property type="entry name" value="Ribosomal_uL1_CS"/>
</dbReference>
<dbReference type="NCBIfam" id="TIGR01169">
    <property type="entry name" value="rplA_bact"/>
    <property type="match status" value="1"/>
</dbReference>
<dbReference type="PANTHER" id="PTHR36427">
    <property type="entry name" value="54S RIBOSOMAL PROTEIN L1, MITOCHONDRIAL"/>
    <property type="match status" value="1"/>
</dbReference>
<dbReference type="PANTHER" id="PTHR36427:SF3">
    <property type="entry name" value="LARGE RIBOSOMAL SUBUNIT PROTEIN UL1M"/>
    <property type="match status" value="1"/>
</dbReference>
<dbReference type="Pfam" id="PF00687">
    <property type="entry name" value="Ribosomal_L1"/>
    <property type="match status" value="1"/>
</dbReference>
<dbReference type="PIRSF" id="PIRSF002155">
    <property type="entry name" value="Ribosomal_L1"/>
    <property type="match status" value="1"/>
</dbReference>
<dbReference type="SUPFAM" id="SSF56808">
    <property type="entry name" value="Ribosomal protein L1"/>
    <property type="match status" value="1"/>
</dbReference>
<dbReference type="PROSITE" id="PS01199">
    <property type="entry name" value="RIBOSOMAL_L1"/>
    <property type="match status" value="1"/>
</dbReference>
<accession>Q0VSM5</accession>
<protein>
    <recommendedName>
        <fullName evidence="1">Large ribosomal subunit protein uL1</fullName>
    </recommendedName>
    <alternativeName>
        <fullName evidence="2">50S ribosomal protein L1</fullName>
    </alternativeName>
</protein>
<keyword id="KW-1185">Reference proteome</keyword>
<keyword id="KW-0678">Repressor</keyword>
<keyword id="KW-0687">Ribonucleoprotein</keyword>
<keyword id="KW-0689">Ribosomal protein</keyword>
<keyword id="KW-0694">RNA-binding</keyword>
<keyword id="KW-0699">rRNA-binding</keyword>
<keyword id="KW-0810">Translation regulation</keyword>
<keyword id="KW-0820">tRNA-binding</keyword>
<name>RL1_ALCBS</name>
<organism>
    <name type="scientific">Alcanivorax borkumensis (strain ATCC 700651 / DSM 11573 / NCIMB 13689 / SK2)</name>
    <dbReference type="NCBI Taxonomy" id="393595"/>
    <lineage>
        <taxon>Bacteria</taxon>
        <taxon>Pseudomonadati</taxon>
        <taxon>Pseudomonadota</taxon>
        <taxon>Gammaproteobacteria</taxon>
        <taxon>Oceanospirillales</taxon>
        <taxon>Alcanivoracaceae</taxon>
        <taxon>Alcanivorax</taxon>
    </lineage>
</organism>
<gene>
    <name evidence="1" type="primary">rplA</name>
    <name type="ordered locus">ABO_0375</name>
</gene>